<dbReference type="EMBL" id="FM954972">
    <property type="protein sequence ID" value="CAV17127.1"/>
    <property type="molecule type" value="Genomic_DNA"/>
</dbReference>
<dbReference type="STRING" id="575788.VS_0092"/>
<dbReference type="KEGG" id="vsp:VS_0092"/>
<dbReference type="eggNOG" id="ENOG502ZP3V">
    <property type="taxonomic scope" value="Bacteria"/>
</dbReference>
<dbReference type="HOGENOM" id="CLU_151816_0_0_6"/>
<dbReference type="Proteomes" id="UP000009100">
    <property type="component" value="Chromosome 1"/>
</dbReference>
<dbReference type="GO" id="GO:0005886">
    <property type="term" value="C:plasma membrane"/>
    <property type="evidence" value="ECO:0007669"/>
    <property type="project" value="UniProtKB-SubCell"/>
</dbReference>
<dbReference type="HAMAP" id="MF_01088">
    <property type="entry name" value="UspB"/>
    <property type="match status" value="1"/>
</dbReference>
<dbReference type="InterPro" id="IPR019598">
    <property type="entry name" value="Universal_stress_protein_B"/>
</dbReference>
<dbReference type="NCBIfam" id="NF003435">
    <property type="entry name" value="PRK04960.1"/>
    <property type="match status" value="1"/>
</dbReference>
<dbReference type="Pfam" id="PF10625">
    <property type="entry name" value="UspB"/>
    <property type="match status" value="1"/>
</dbReference>
<comment type="subcellular location">
    <subcellularLocation>
        <location evidence="1">Cell inner membrane</location>
        <topology evidence="1">Multi-pass membrane protein</topology>
    </subcellularLocation>
</comment>
<comment type="similarity">
    <text evidence="1">Belongs to the universal stress protein B family.</text>
</comment>
<keyword id="KW-0997">Cell inner membrane</keyword>
<keyword id="KW-1003">Cell membrane</keyword>
<keyword id="KW-0472">Membrane</keyword>
<keyword id="KW-0812">Transmembrane</keyword>
<keyword id="KW-1133">Transmembrane helix</keyword>
<name>USPB_VIBA3</name>
<evidence type="ECO:0000255" key="1">
    <source>
        <dbReference type="HAMAP-Rule" id="MF_01088"/>
    </source>
</evidence>
<gene>
    <name evidence="1" type="primary">uspB</name>
    <name type="ordered locus">VS_0092</name>
</gene>
<proteinExistence type="inferred from homology"/>
<protein>
    <recommendedName>
        <fullName evidence="1">Universal stress protein B homolog</fullName>
    </recommendedName>
</protein>
<sequence>MISGDTILFALMVVTCVNWARYFTALRTLIYIMREAHPLLYQQVDGGGFFTTHGNMTKQVRLFSYIKSKEYHHHHDEVFTSKCDRVRQLFILSSALLGVTLLSSFIV</sequence>
<accession>B7VHB5</accession>
<reference key="1">
    <citation type="submission" date="2009-02" db="EMBL/GenBank/DDBJ databases">
        <title>Vibrio splendidus str. LGP32 complete genome.</title>
        <authorList>
            <person name="Mazel D."/>
            <person name="Le Roux F."/>
        </authorList>
    </citation>
    <scope>NUCLEOTIDE SEQUENCE [LARGE SCALE GENOMIC DNA]</scope>
    <source>
        <strain>LGP32</strain>
    </source>
</reference>
<feature type="chain" id="PRO_1000149881" description="Universal stress protein B homolog">
    <location>
        <begin position="1"/>
        <end position="107"/>
    </location>
</feature>
<feature type="transmembrane region" description="Helical" evidence="1">
    <location>
        <begin position="6"/>
        <end position="23"/>
    </location>
</feature>
<feature type="transmembrane region" description="Helical" evidence="1">
    <location>
        <begin position="89"/>
        <end position="106"/>
    </location>
</feature>
<organism>
    <name type="scientific">Vibrio atlanticus (strain LGP32)</name>
    <name type="common">Vibrio splendidus (strain Mel32)</name>
    <dbReference type="NCBI Taxonomy" id="575788"/>
    <lineage>
        <taxon>Bacteria</taxon>
        <taxon>Pseudomonadati</taxon>
        <taxon>Pseudomonadota</taxon>
        <taxon>Gammaproteobacteria</taxon>
        <taxon>Vibrionales</taxon>
        <taxon>Vibrionaceae</taxon>
        <taxon>Vibrio</taxon>
    </lineage>
</organism>